<organism>
    <name type="scientific">Lotus japonicus</name>
    <name type="common">Lotus corniculatus var. japonicus</name>
    <dbReference type="NCBI Taxonomy" id="34305"/>
    <lineage>
        <taxon>Eukaryota</taxon>
        <taxon>Viridiplantae</taxon>
        <taxon>Streptophyta</taxon>
        <taxon>Embryophyta</taxon>
        <taxon>Tracheophyta</taxon>
        <taxon>Spermatophyta</taxon>
        <taxon>Magnoliopsida</taxon>
        <taxon>eudicotyledons</taxon>
        <taxon>Gunneridae</taxon>
        <taxon>Pentapetalae</taxon>
        <taxon>rosids</taxon>
        <taxon>fabids</taxon>
        <taxon>Fabales</taxon>
        <taxon>Fabaceae</taxon>
        <taxon>Papilionoideae</taxon>
        <taxon>50 kb inversion clade</taxon>
        <taxon>NPAAA clade</taxon>
        <taxon>Hologalegina</taxon>
        <taxon>robinioid clade</taxon>
        <taxon>Loteae</taxon>
        <taxon>Lotus</taxon>
    </lineage>
</organism>
<proteinExistence type="evidence at protein level"/>
<reference key="1">
    <citation type="journal article" date="2005" name="Nature">
        <title>Plastid proteins crucial for symbiotic fungal and bacterial entry into plant roots.</title>
        <authorList>
            <person name="Imaizumi-Anraku H."/>
            <person name="Takeda N."/>
            <person name="Charpentier M."/>
            <person name="Perry J."/>
            <person name="Miwa H."/>
            <person name="Umehara Y."/>
            <person name="Kouchi H."/>
            <person name="Murakami Y."/>
            <person name="Mulder L."/>
            <person name="Vickers K."/>
            <person name="Pike J."/>
            <person name="Downie J.A."/>
            <person name="Wang T."/>
            <person name="Sato S."/>
            <person name="Asamizu E."/>
            <person name="Tabata S."/>
            <person name="Yoshikawa M."/>
            <person name="Murooka Y."/>
            <person name="Wu G.-J."/>
            <person name="Kawaguchi M."/>
            <person name="Kawasaki S."/>
            <person name="Parniske M."/>
            <person name="Hayashi M."/>
        </authorList>
    </citation>
    <scope>NUCLEOTIDE SEQUENCE [GENOMIC DNA / MRNA]</scope>
    <scope>TISSUE SPECIFICITY</scope>
    <scope>SUBCELLULAR LOCATION</scope>
    <scope>INDUCTION</scope>
    <scope>MUTAGENESIS OF SER-145; GLY-303; SER-322; GLY-530; GLU-830 AND GLY-882</scope>
    <source>
        <strain>cv. Gifu / B-129</strain>
    </source>
</reference>
<reference key="2">
    <citation type="journal article" date="2006" name="Mol. Plant Microbe Interact.">
        <title>Analysis of Nod-factor-induced calcium signaling in root hairs of symbiotically defective mutants of Lotus japonicus.</title>
        <authorList>
            <person name="Miwa H."/>
            <person name="Sun J."/>
            <person name="Oldroyd G.E."/>
            <person name="Downie J.A."/>
        </authorList>
    </citation>
    <scope>FUNCTION</scope>
</reference>
<reference key="3">
    <citation type="journal article" date="2008" name="Plant Cell">
        <title>Lotus japonicus CASTOR and POLLUX are ion channels essential for perinuclear calcium spiking in legume root endosymbiosis.</title>
        <authorList>
            <person name="Charpentier M."/>
            <person name="Bredemeier R."/>
            <person name="Wanner G."/>
            <person name="Takeda N."/>
            <person name="Schleiff E."/>
            <person name="Parniske M."/>
        </authorList>
    </citation>
    <scope>FUNCTION</scope>
    <scope>SUBUNIT</scope>
    <scope>TISSUE SPECIFICITY</scope>
    <scope>SUBCELLULAR LOCATION</scope>
</reference>
<name>POLLU_LOTJA</name>
<evidence type="ECO:0000255" key="1"/>
<evidence type="ECO:0000255" key="2">
    <source>
        <dbReference type="PROSITE-ProRule" id="PRU00543"/>
    </source>
</evidence>
<evidence type="ECO:0000256" key="3">
    <source>
        <dbReference type="SAM" id="MobiDB-lite"/>
    </source>
</evidence>
<evidence type="ECO:0000269" key="4">
    <source>
    </source>
</evidence>
<evidence type="ECO:0000269" key="5">
    <source>
    </source>
</evidence>
<evidence type="ECO:0000269" key="6">
    <source>
    </source>
</evidence>
<evidence type="ECO:0000305" key="7"/>
<dbReference type="EMBL" id="AB162158">
    <property type="protein sequence ID" value="BAD89022.1"/>
    <property type="molecule type" value="mRNA"/>
</dbReference>
<dbReference type="EMBL" id="AB162017">
    <property type="protein sequence ID" value="BAD89020.1"/>
    <property type="molecule type" value="Genomic_DNA"/>
</dbReference>
<dbReference type="SMR" id="Q5H8A5"/>
<dbReference type="TCDB" id="1.A.1.23.3">
    <property type="family name" value="the voltage-gated ion channel (vic) superfamily"/>
</dbReference>
<dbReference type="OMA" id="YVVDVCF"/>
<dbReference type="GO" id="GO:0031965">
    <property type="term" value="C:nuclear membrane"/>
    <property type="evidence" value="ECO:0007669"/>
    <property type="project" value="UniProtKB-SubCell"/>
</dbReference>
<dbReference type="GO" id="GO:0034220">
    <property type="term" value="P:monoatomic ion transmembrane transport"/>
    <property type="evidence" value="ECO:0007669"/>
    <property type="project" value="UniProtKB-KW"/>
</dbReference>
<dbReference type="FunFam" id="3.40.50.720:FF:000176">
    <property type="entry name" value="Probable ion channel POLLUX"/>
    <property type="match status" value="1"/>
</dbReference>
<dbReference type="Gene3D" id="3.40.50.720">
    <property type="entry name" value="NAD(P)-binding Rossmann-like Domain"/>
    <property type="match status" value="1"/>
</dbReference>
<dbReference type="InterPro" id="IPR044849">
    <property type="entry name" value="CASTOR/POLLUX/SYM8-like"/>
</dbReference>
<dbReference type="InterPro" id="IPR010420">
    <property type="entry name" value="CASTOR/POLLUX/SYM8_dom"/>
</dbReference>
<dbReference type="InterPro" id="IPR036291">
    <property type="entry name" value="NAD(P)-bd_dom_sf"/>
</dbReference>
<dbReference type="InterPro" id="IPR003148">
    <property type="entry name" value="RCK_N"/>
</dbReference>
<dbReference type="PANTHER" id="PTHR31563">
    <property type="entry name" value="ION CHANNEL POLLUX-RELATED"/>
    <property type="match status" value="1"/>
</dbReference>
<dbReference type="PANTHER" id="PTHR31563:SF10">
    <property type="entry name" value="ION CHANNEL POLLUX-RELATED"/>
    <property type="match status" value="1"/>
</dbReference>
<dbReference type="Pfam" id="PF06241">
    <property type="entry name" value="Castor_Poll_mid"/>
    <property type="match status" value="1"/>
</dbReference>
<dbReference type="Pfam" id="PF22614">
    <property type="entry name" value="Slo-like_RCK"/>
    <property type="match status" value="1"/>
</dbReference>
<dbReference type="SUPFAM" id="SSF51735">
    <property type="entry name" value="NAD(P)-binding Rossmann-fold domains"/>
    <property type="match status" value="1"/>
</dbReference>
<dbReference type="SUPFAM" id="SSF81324">
    <property type="entry name" value="Voltage-gated potassium channels"/>
    <property type="match status" value="1"/>
</dbReference>
<dbReference type="PROSITE" id="PS51201">
    <property type="entry name" value="RCK_N"/>
    <property type="match status" value="2"/>
</dbReference>
<accession>Q5H8A5</accession>
<gene>
    <name type="primary">POLLUX</name>
</gene>
<sequence length="917" mass="102062">MIPLPVAAANSNSNSNSNSNDEESPNLSTVIKPPLKKTKTLLPPPSSSSSNRPLHLRVSIDNNNNNNAPPPPADFSDHQWNYPSFLGTTTRKRRPSSVKPPSTSNLRFDTIPKTKTKTKTNTNTNTNTNTNTNTNTDLPPPPVPSSSPVARPQHHNHRSPPIFYLLIITCIIFVPYSSYLQYKLAKLEDHKLHLCRQSQIHFSSGHGNGKISIPIHDASFSYILSRKAALYIVLFTLILPFLLYKYLDYLPQIINFLRRTHNNKEDVPLKKRIAYMLDVFFSIYPYAKLLALLFATLFLIGFGGLALYAVTGGSLAEALWHSWTYVADSGNHAETQGTGQRVVSVSISSGGMLIFAMMLGLVSDAISEKVDSLRKGKCEVIERNHILILGWSDKLGSLLKQLAIANKSVGGGVIVVLAEKEKEEMEMDITKLEFDFMGTSVICRSGSPLILADLKKVSVSKARAIIVLASDENADQSDARALRVVLSLTGVKEGLRGHVVVEMSDLDNEPLVKLVGGELIETVVAHDVIGRLMIQCALQPGLAQIWEDILGFENAEFYIKRWPELDGLSFKDILISFPDAIPCGVKVAADGGKIVINPDDSYVMRDGDEVLVIAEDDDTYSPGSLPEVLKGFFPRIPDAPKYPEKILFCGWRRDIDDMIMVLEAFLAPGSELWMFNEVPEKEREKKLAAGGLDVFGLENIKLVHREGNAVIRRHLESLPLETFDSILILADESVEDSVAHSDSRSLATLLLIRDIQSRRLPYKDTKSTSLRLSGFSHNSWIREMQQASDKSIIISEILDSRTRNLVSVSRISDYVLSNELVSMALAMVAEDKQINRVLEELFAEQGNEMCIKPAEFYLFDQEELCFYDIMIRGRARQEIIIGYRLANQERAIINPSEKLVARKWSLGDVFVVIASGD</sequence>
<comment type="function">
    <text evidence="5 6">Ion channel with permeability for potassium. Involved in perinuclear calcium spiking but not in cytosolic calcium influx. Required for early signal transduction events leading to endosymbiosis. Acts early in a signal transduction chain leading from the perception of Nod factor to the activation of calcium spiking. Also involved in fungal entry into root epidermal cells during the establishment of the arbuscular mycorrhizal symbiosis.</text>
</comment>
<comment type="subunit">
    <text evidence="6">Homooligomer.</text>
</comment>
<comment type="subcellular location">
    <subcellularLocation>
        <location evidence="4 6">Nucleus membrane</location>
        <topology evidence="4 6">Multi-pass membrane protein</topology>
    </subcellularLocation>
    <text>The chloroplastic localization proposed by PubMed:15616514 is probably an overexpression artifact.</text>
</comment>
<comment type="tissue specificity">
    <text evidence="4 6">Mainly expressed in nodules. Also detected in infected and uninfected roots, leaves, seed pods, and flower buds.</text>
</comment>
<comment type="induction">
    <text evidence="4">Slightly repressed during the first 2 days after bacterial or Nod factor treatment.</text>
</comment>
<comment type="similarity">
    <text evidence="7">Belongs to the castor/pollux (TC 1.A.1.23) family.</text>
</comment>
<keyword id="KW-0175">Coiled coil</keyword>
<keyword id="KW-0407">Ion channel</keyword>
<keyword id="KW-0406">Ion transport</keyword>
<keyword id="KW-0472">Membrane</keyword>
<keyword id="KW-0539">Nucleus</keyword>
<keyword id="KW-0812">Transmembrane</keyword>
<keyword id="KW-1133">Transmembrane helix</keyword>
<keyword id="KW-0813">Transport</keyword>
<protein>
    <recommendedName>
        <fullName>Ion channel POLLUX</fullName>
    </recommendedName>
</protein>
<feature type="chain" id="PRO_0000004683" description="Ion channel POLLUX">
    <location>
        <begin position="1"/>
        <end position="917"/>
    </location>
</feature>
<feature type="transmembrane region" description="Helical" evidence="1">
    <location>
        <begin position="160"/>
        <end position="180"/>
    </location>
</feature>
<feature type="transmembrane region" description="Helical" evidence="1">
    <location>
        <begin position="230"/>
        <end position="250"/>
    </location>
</feature>
<feature type="transmembrane region" description="Helical" evidence="1">
    <location>
        <begin position="290"/>
        <end position="310"/>
    </location>
</feature>
<feature type="transmembrane region" description="Helical" evidence="1">
    <location>
        <begin position="342"/>
        <end position="362"/>
    </location>
</feature>
<feature type="domain" description="RCK N-terminal 1" evidence="2">
    <location>
        <begin position="383"/>
        <end position="524"/>
    </location>
</feature>
<feature type="domain" description="RCK N-terminal 2" evidence="2">
    <location>
        <begin position="643"/>
        <end position="792"/>
    </location>
</feature>
<feature type="region of interest" description="Disordered" evidence="3">
    <location>
        <begin position="1"/>
        <end position="154"/>
    </location>
</feature>
<feature type="coiled-coil region" evidence="1">
    <location>
        <begin position="413"/>
        <end position="435"/>
    </location>
</feature>
<feature type="compositionally biased region" description="Low complexity" evidence="3">
    <location>
        <begin position="7"/>
        <end position="19"/>
    </location>
</feature>
<feature type="compositionally biased region" description="Polar residues" evidence="3">
    <location>
        <begin position="78"/>
        <end position="89"/>
    </location>
</feature>
<feature type="compositionally biased region" description="Low complexity" evidence="3">
    <location>
        <begin position="119"/>
        <end position="136"/>
    </location>
</feature>
<feature type="mutagenesis site" description="In pollux-4; no nodules formation or arbuscular mycorrhizal symbiosis." evidence="4">
    <original>S</original>
    <variation>F</variation>
    <location>
        <position position="145"/>
    </location>
</feature>
<feature type="mutagenesis site" description="In pollux-1 /Ljsym23-1 and pollux-2 /Ljsym23-2; no nodules formation or arbuscular mycorrhizal symbiosis." evidence="4">
    <original>G</original>
    <variation>S</variation>
    <location>
        <position position="303"/>
    </location>
</feature>
<feature type="mutagenesis site" description="In pollux-5; no nodules formation or arbuscular mycorrhizal symbiosis." evidence="4">
    <original>S</original>
    <variation>F</variation>
    <location>
        <position position="322"/>
    </location>
</feature>
<feature type="mutagenesis site" description="In pollux-7; no nodules formation or arbuscular mycorrhizal symbiosis." evidence="4">
    <original>G</original>
    <variation>E</variation>
    <location>
        <position position="530"/>
    </location>
</feature>
<feature type="mutagenesis site" description="In pollux-9; no nodules formation or arbuscular mycorrhizal symbiosis." evidence="4">
    <original>E</original>
    <variation>K</variation>
    <location>
        <position position="830"/>
    </location>
</feature>
<feature type="mutagenesis site" description="In pollux-3 /Ljsym86-1; no nodules formation or arbuscular mycorrhizal symbiosis.">
    <location>
        <begin position="841"/>
        <end position="917"/>
    </location>
</feature>
<feature type="mutagenesis site" description="In pollux-10; no nodules formation or arbuscular mycorrhizal symbiosis." evidence="4">
    <original>G</original>
    <variation>S</variation>
    <location>
        <position position="882"/>
    </location>
</feature>